<evidence type="ECO:0000255" key="1">
    <source>
        <dbReference type="HAMAP-Rule" id="MF_00268"/>
    </source>
</evidence>
<reference key="1">
    <citation type="submission" date="2004-07" db="EMBL/GenBank/DDBJ databases">
        <title>Cloning and sequencing of the recA gene of Pseudomonas stutzeri JM300 and ATCC 17587.</title>
        <authorList>
            <person name="Meier P."/>
            <person name="Wackernagel W."/>
        </authorList>
    </citation>
    <scope>NUCLEOTIDE SEQUENCE [GENOMIC DNA]</scope>
    <source>
        <strain>ATCC 17587 / LMG 5838 / Stanier 220</strain>
        <strain>DSM 10701 / IAM 15110 / JCM 21571 / JM300</strain>
    </source>
</reference>
<reference key="2">
    <citation type="journal article" date="1993" name="Antonie Van Leeuwenhoek">
        <title>Regulation of the expression of the Pseudomonas stutzeri recA gene.</title>
        <authorList>
            <person name="Vosman B."/>
            <person name="Rauch P.J."/>
            <person name="Westerhoff H.V."/>
            <person name="Hellingwerf K.J."/>
        </authorList>
    </citation>
    <scope>NUCLEOTIDE SEQUENCE [GENOMIC DNA] OF 1-74</scope>
</reference>
<feature type="chain" id="PRO_0000122809" description="Protein RecA">
    <location>
        <begin position="1"/>
        <end position="347"/>
    </location>
</feature>
<feature type="binding site" evidence="1">
    <location>
        <begin position="65"/>
        <end position="72"/>
    </location>
    <ligand>
        <name>ATP</name>
        <dbReference type="ChEBI" id="CHEBI:30616"/>
    </ligand>
</feature>
<feature type="sequence variant" description="In strain: ATCC 17587.">
    <original>S</original>
    <variation>A</variation>
    <location>
        <position position="38"/>
    </location>
</feature>
<feature type="sequence variant" description="In strain: ATCC 17587.">
    <original>A</original>
    <variation>E</variation>
    <location>
        <position position="81"/>
    </location>
</feature>
<feature type="sequence variant" description="In strain: ATCC 17587.">
    <original>R</original>
    <variation>K</variation>
    <location>
        <position position="84"/>
    </location>
</feature>
<feature type="sequence variant" description="In strain: ATCC 17587.">
    <original>S</original>
    <variation>A</variation>
    <location>
        <position position="87"/>
    </location>
</feature>
<feature type="sequence variant" description="In strain: ATCC 17587.">
    <original>A</original>
    <variation>T</variation>
    <location>
        <position position="161"/>
    </location>
</feature>
<feature type="sequence variant" description="In strain: ATCC 17587.">
    <original>DQAF</original>
    <variation>GKGI</variation>
    <location>
        <begin position="264"/>
        <end position="267"/>
    </location>
</feature>
<feature type="sequence variant" description="In strain: ATCC 17587.">
    <original>I</original>
    <variation>V</variation>
    <location>
        <position position="273"/>
    </location>
</feature>
<feature type="sequence variant" description="In strain: ATCC 17587.">
    <original>S</original>
    <variation>N</variation>
    <location>
        <position position="295"/>
    </location>
</feature>
<feature type="sequence variant" description="In strain: ATCC 17587.">
    <original>E</original>
    <variation>D</variation>
    <location>
        <position position="310"/>
    </location>
</feature>
<feature type="sequence variant" description="In strain: ATCC 17587.">
    <original>Q</original>
    <variation>R</variation>
    <location>
        <position position="316"/>
    </location>
</feature>
<feature type="sequence variant" description="In strain: ATCC 17587.">
    <original>A</original>
    <variation>D</variation>
    <location>
        <position position="324"/>
    </location>
</feature>
<feature type="sequence variant" description="In strain: ATCC 17587.">
    <original>TSANTKATPVA</original>
    <variation>VSGGSKANVVT</variation>
    <location>
        <begin position="329"/>
        <end position="339"/>
    </location>
</feature>
<feature type="sequence variant" description="In strain: ATCC 17587.">
    <original>I</original>
    <variation>L</variation>
    <location>
        <position position="347"/>
    </location>
</feature>
<sequence length="347" mass="37114">MDENKKRALAAALGQIEKQFGKGAVMRMGDHDRQAIPSISTGSLGLDIALGIGGLPKGRIVEIYGPESSGKTTLTLSVIAAAQRMGSTCAFVDAEHALDPDYAGKLGVNVDDLLVSQPDTGEQALEITDMLVRSNAVDVIIVDSVAALVPKAEIEGEMGDAHVGLQARLMSQALRKITGNIKNANCLVIFINQIRMKIGVMFGSPETTTGGNALKFYASVRLDIRRTGAVKEGDEVVGSETRVKVVKNKVAPPFRQAEFQILYDQAFYRNGEIIDLGVQQGLVEKSGAWYAYKGSKIGQGKANAAKYLEENPEIGQEIEQQIRAKLLVTSANTKATPVAEDLADADI</sequence>
<protein>
    <recommendedName>
        <fullName evidence="1">Protein RecA</fullName>
    </recommendedName>
    <alternativeName>
        <fullName evidence="1">Recombinase A</fullName>
    </alternativeName>
</protein>
<proteinExistence type="inferred from homology"/>
<dbReference type="EMBL" id="AJ783435">
    <property type="protein sequence ID" value="CAH03857.1"/>
    <property type="molecule type" value="Genomic_DNA"/>
</dbReference>
<dbReference type="EMBL" id="AJ783436">
    <property type="protein sequence ID" value="CAH03858.1"/>
    <property type="molecule type" value="Genomic_DNA"/>
</dbReference>
<dbReference type="EMBL" id="S58865">
    <property type="protein sequence ID" value="AAB26404.1"/>
    <property type="molecule type" value="Genomic_DNA"/>
</dbReference>
<dbReference type="PIR" id="A56778">
    <property type="entry name" value="A56778"/>
</dbReference>
<dbReference type="RefSeq" id="WP_003285715.1">
    <property type="nucleotide sequence ID" value="NZ_POUM01000007.1"/>
</dbReference>
<dbReference type="SMR" id="Q07809"/>
<dbReference type="eggNOG" id="COG0468">
    <property type="taxonomic scope" value="Bacteria"/>
</dbReference>
<dbReference type="GO" id="GO:0005829">
    <property type="term" value="C:cytosol"/>
    <property type="evidence" value="ECO:0007669"/>
    <property type="project" value="TreeGrafter"/>
</dbReference>
<dbReference type="GO" id="GO:0005524">
    <property type="term" value="F:ATP binding"/>
    <property type="evidence" value="ECO:0007669"/>
    <property type="project" value="UniProtKB-UniRule"/>
</dbReference>
<dbReference type="GO" id="GO:0016887">
    <property type="term" value="F:ATP hydrolysis activity"/>
    <property type="evidence" value="ECO:0007669"/>
    <property type="project" value="InterPro"/>
</dbReference>
<dbReference type="GO" id="GO:0140664">
    <property type="term" value="F:ATP-dependent DNA damage sensor activity"/>
    <property type="evidence" value="ECO:0007669"/>
    <property type="project" value="InterPro"/>
</dbReference>
<dbReference type="GO" id="GO:0003684">
    <property type="term" value="F:damaged DNA binding"/>
    <property type="evidence" value="ECO:0007669"/>
    <property type="project" value="UniProtKB-UniRule"/>
</dbReference>
<dbReference type="GO" id="GO:0003697">
    <property type="term" value="F:single-stranded DNA binding"/>
    <property type="evidence" value="ECO:0007669"/>
    <property type="project" value="UniProtKB-UniRule"/>
</dbReference>
<dbReference type="GO" id="GO:0006310">
    <property type="term" value="P:DNA recombination"/>
    <property type="evidence" value="ECO:0007669"/>
    <property type="project" value="UniProtKB-UniRule"/>
</dbReference>
<dbReference type="GO" id="GO:0006281">
    <property type="term" value="P:DNA repair"/>
    <property type="evidence" value="ECO:0007669"/>
    <property type="project" value="UniProtKB-UniRule"/>
</dbReference>
<dbReference type="GO" id="GO:0009432">
    <property type="term" value="P:SOS response"/>
    <property type="evidence" value="ECO:0007669"/>
    <property type="project" value="UniProtKB-UniRule"/>
</dbReference>
<dbReference type="CDD" id="cd00983">
    <property type="entry name" value="RecA"/>
    <property type="match status" value="1"/>
</dbReference>
<dbReference type="FunFam" id="3.40.50.300:FF:000087">
    <property type="entry name" value="Recombinase RecA"/>
    <property type="match status" value="1"/>
</dbReference>
<dbReference type="Gene3D" id="3.40.50.300">
    <property type="entry name" value="P-loop containing nucleotide triphosphate hydrolases"/>
    <property type="match status" value="1"/>
</dbReference>
<dbReference type="HAMAP" id="MF_00268">
    <property type="entry name" value="RecA"/>
    <property type="match status" value="1"/>
</dbReference>
<dbReference type="InterPro" id="IPR003593">
    <property type="entry name" value="AAA+_ATPase"/>
</dbReference>
<dbReference type="InterPro" id="IPR013765">
    <property type="entry name" value="DNA_recomb/repair_RecA"/>
</dbReference>
<dbReference type="InterPro" id="IPR020584">
    <property type="entry name" value="DNA_recomb/repair_RecA_CS"/>
</dbReference>
<dbReference type="InterPro" id="IPR027417">
    <property type="entry name" value="P-loop_NTPase"/>
</dbReference>
<dbReference type="InterPro" id="IPR049261">
    <property type="entry name" value="RecA-like_C"/>
</dbReference>
<dbReference type="InterPro" id="IPR049428">
    <property type="entry name" value="RecA-like_N"/>
</dbReference>
<dbReference type="InterPro" id="IPR020588">
    <property type="entry name" value="RecA_ATP-bd"/>
</dbReference>
<dbReference type="InterPro" id="IPR023400">
    <property type="entry name" value="RecA_C_sf"/>
</dbReference>
<dbReference type="InterPro" id="IPR020587">
    <property type="entry name" value="RecA_monomer-monomer_interface"/>
</dbReference>
<dbReference type="NCBIfam" id="TIGR02012">
    <property type="entry name" value="tigrfam_recA"/>
    <property type="match status" value="1"/>
</dbReference>
<dbReference type="PANTHER" id="PTHR45900:SF1">
    <property type="entry name" value="MITOCHONDRIAL DNA REPAIR PROTEIN RECA HOMOLOG-RELATED"/>
    <property type="match status" value="1"/>
</dbReference>
<dbReference type="PANTHER" id="PTHR45900">
    <property type="entry name" value="RECA"/>
    <property type="match status" value="1"/>
</dbReference>
<dbReference type="Pfam" id="PF00154">
    <property type="entry name" value="RecA"/>
    <property type="match status" value="1"/>
</dbReference>
<dbReference type="Pfam" id="PF21096">
    <property type="entry name" value="RecA_C"/>
    <property type="match status" value="1"/>
</dbReference>
<dbReference type="PRINTS" id="PR00142">
    <property type="entry name" value="RECA"/>
</dbReference>
<dbReference type="SMART" id="SM00382">
    <property type="entry name" value="AAA"/>
    <property type="match status" value="1"/>
</dbReference>
<dbReference type="SUPFAM" id="SSF52540">
    <property type="entry name" value="P-loop containing nucleoside triphosphate hydrolases"/>
    <property type="match status" value="1"/>
</dbReference>
<dbReference type="SUPFAM" id="SSF54752">
    <property type="entry name" value="RecA protein, C-terminal domain"/>
    <property type="match status" value="1"/>
</dbReference>
<dbReference type="PROSITE" id="PS00321">
    <property type="entry name" value="RECA_1"/>
    <property type="match status" value="1"/>
</dbReference>
<dbReference type="PROSITE" id="PS50162">
    <property type="entry name" value="RECA_2"/>
    <property type="match status" value="1"/>
</dbReference>
<dbReference type="PROSITE" id="PS50163">
    <property type="entry name" value="RECA_3"/>
    <property type="match status" value="1"/>
</dbReference>
<accession>Q07809</accession>
<accession>Q6EV35</accession>
<accession>Q6EV36</accession>
<comment type="function">
    <text>Can catalyze the hydrolysis of ATP in the presence of single-stranded DNA, the ATP-dependent uptake of single-stranded DNA by duplex DNA, and the ATP-dependent hybridization of homologous single-stranded DNAs. It interacts with LexA causing its activation and leading to its autocatalytic cleavage.</text>
</comment>
<comment type="subcellular location">
    <subcellularLocation>
        <location evidence="1">Cytoplasm</location>
    </subcellularLocation>
</comment>
<comment type="similarity">
    <text evidence="1">Belongs to the RecA family.</text>
</comment>
<gene>
    <name evidence="1" type="primary">recA</name>
</gene>
<keyword id="KW-0067">ATP-binding</keyword>
<keyword id="KW-0963">Cytoplasm</keyword>
<keyword id="KW-0227">DNA damage</keyword>
<keyword id="KW-0233">DNA recombination</keyword>
<keyword id="KW-0234">DNA repair</keyword>
<keyword id="KW-0238">DNA-binding</keyword>
<keyword id="KW-0547">Nucleotide-binding</keyword>
<keyword id="KW-0742">SOS response</keyword>
<name>RECA_STUST</name>
<organism>
    <name type="scientific">Stutzerimonas stutzeri</name>
    <name type="common">Pseudomonas stutzeri</name>
    <dbReference type="NCBI Taxonomy" id="316"/>
    <lineage>
        <taxon>Bacteria</taxon>
        <taxon>Pseudomonadati</taxon>
        <taxon>Pseudomonadota</taxon>
        <taxon>Gammaproteobacteria</taxon>
        <taxon>Pseudomonadales</taxon>
        <taxon>Pseudomonadaceae</taxon>
        <taxon>Stutzerimonas</taxon>
    </lineage>
</organism>